<protein>
    <recommendedName>
        <fullName>Heat shock protein SSA1</fullName>
    </recommendedName>
    <alternativeName>
        <fullName>Heat shock protein YG100</fullName>
    </alternativeName>
</protein>
<accession>P10591</accession>
<accession>D6VPL2</accession>
<evidence type="ECO:0000256" key="1">
    <source>
        <dbReference type="SAM" id="MobiDB-lite"/>
    </source>
</evidence>
<evidence type="ECO:0000269" key="2">
    <source>
    </source>
</evidence>
<evidence type="ECO:0000269" key="3">
    <source>
    </source>
</evidence>
<evidence type="ECO:0000269" key="4">
    <source>
    </source>
</evidence>
<evidence type="ECO:0000269" key="5">
    <source>
    </source>
</evidence>
<evidence type="ECO:0000269" key="6">
    <source>
    </source>
</evidence>
<evidence type="ECO:0000269" key="7">
    <source>
    </source>
</evidence>
<evidence type="ECO:0000305" key="8"/>
<evidence type="ECO:0007744" key="9">
    <source>
    </source>
</evidence>
<evidence type="ECO:0007744" key="10">
    <source>
    </source>
</evidence>
<evidence type="ECO:0007744" key="11">
    <source>
    </source>
</evidence>
<evidence type="ECO:0007829" key="12">
    <source>
        <dbReference type="PDB" id="5Z8I"/>
    </source>
</evidence>
<evidence type="ECO:0007829" key="13">
    <source>
        <dbReference type="PDB" id="5Z8Q"/>
    </source>
</evidence>
<keyword id="KW-0002">3D-structure</keyword>
<keyword id="KW-0007">Acetylation</keyword>
<keyword id="KW-0067">ATP-binding</keyword>
<keyword id="KW-0134">Cell wall</keyword>
<keyword id="KW-0963">Cytoplasm</keyword>
<keyword id="KW-0903">Direct protein sequencing</keyword>
<keyword id="KW-1017">Isopeptide bond</keyword>
<keyword id="KW-0547">Nucleotide-binding</keyword>
<keyword id="KW-0597">Phosphoprotein</keyword>
<keyword id="KW-1185">Reference proteome</keyword>
<keyword id="KW-0964">Secreted</keyword>
<keyword id="KW-0346">Stress response</keyword>
<keyword id="KW-0832">Ubl conjugation</keyword>
<feature type="initiator methionine" description="Removed" evidence="7">
    <location>
        <position position="1"/>
    </location>
</feature>
<feature type="chain" id="PRO_0000078385" description="Heat shock protein SSA1">
    <location>
        <begin position="2"/>
        <end position="642"/>
    </location>
</feature>
<feature type="region of interest" description="Disordered" evidence="1">
    <location>
        <begin position="606"/>
        <end position="642"/>
    </location>
</feature>
<feature type="compositionally biased region" description="Gly residues" evidence="1">
    <location>
        <begin position="610"/>
        <end position="625"/>
    </location>
</feature>
<feature type="modified residue" description="N-acetylserine" evidence="7">
    <location>
        <position position="2"/>
    </location>
</feature>
<feature type="modified residue" description="Phosphoserine" evidence="9">
    <location>
        <position position="62"/>
    </location>
</feature>
<feature type="modified residue" description="Phosphoserine" evidence="10">
    <location>
        <position position="551"/>
    </location>
</feature>
<feature type="modified residue" description="Phosphoserine" evidence="9">
    <location>
        <position position="603"/>
    </location>
</feature>
<feature type="cross-link" description="Glycyl lysine isopeptide (Lys-Gly) (interchain with G-Cter in ubiquitin)" evidence="11">
    <location>
        <position position="556"/>
    </location>
</feature>
<feature type="sequence conflict" description="In Ref. 3; AAC04952." evidence="8" ref="3">
    <original>S</original>
    <variation>F</variation>
    <location>
        <position position="208"/>
    </location>
</feature>
<feature type="sequence conflict" description="In Ref. 3; AAC04952." evidence="8" ref="3">
    <original>P</original>
    <variation>S</variation>
    <location>
        <position position="418"/>
    </location>
</feature>
<feature type="sequence conflict" description="In Ref. 3; AAC04952." evidence="8" ref="3">
    <original>S</original>
    <variation>F</variation>
    <location>
        <position position="422"/>
    </location>
</feature>
<feature type="strand" evidence="12">
    <location>
        <begin position="384"/>
        <end position="386"/>
    </location>
</feature>
<feature type="strand" evidence="12">
    <location>
        <begin position="398"/>
        <end position="402"/>
    </location>
</feature>
<feature type="turn" evidence="12">
    <location>
        <begin position="403"/>
        <end position="405"/>
    </location>
</feature>
<feature type="strand" evidence="12">
    <location>
        <begin position="406"/>
        <end position="411"/>
    </location>
</feature>
<feature type="strand" evidence="12">
    <location>
        <begin position="416"/>
        <end position="428"/>
    </location>
</feature>
<feature type="strand" evidence="12">
    <location>
        <begin position="433"/>
        <end position="443"/>
    </location>
</feature>
<feature type="helix" evidence="12">
    <location>
        <begin position="447"/>
        <end position="449"/>
    </location>
</feature>
<feature type="strand" evidence="12">
    <location>
        <begin position="450"/>
        <end position="459"/>
    </location>
</feature>
<feature type="strand" evidence="12">
    <location>
        <begin position="471"/>
        <end position="477"/>
    </location>
</feature>
<feature type="strand" evidence="12">
    <location>
        <begin position="482"/>
        <end position="489"/>
    </location>
</feature>
<feature type="turn" evidence="12">
    <location>
        <begin position="490"/>
        <end position="492"/>
    </location>
</feature>
<feature type="strand" evidence="12">
    <location>
        <begin position="495"/>
        <end position="502"/>
    </location>
</feature>
<feature type="helix" evidence="12">
    <location>
        <begin position="509"/>
        <end position="521"/>
    </location>
</feature>
<feature type="helix" evidence="12">
    <location>
        <begin position="523"/>
        <end position="533"/>
    </location>
</feature>
<feature type="strand" evidence="12">
    <location>
        <begin position="537"/>
        <end position="542"/>
    </location>
</feature>
<feature type="turn" evidence="13">
    <location>
        <begin position="554"/>
        <end position="556"/>
    </location>
</feature>
<feature type="helix" evidence="13">
    <location>
        <begin position="559"/>
        <end position="578"/>
    </location>
</feature>
<feature type="helix" evidence="13">
    <location>
        <begin position="584"/>
        <end position="609"/>
    </location>
</feature>
<feature type="strand" evidence="13">
    <location>
        <begin position="614"/>
        <end position="616"/>
    </location>
</feature>
<comment type="function">
    <text evidence="3">May play a role in the transport of polypeptides both across the mitochondrial membranes and into the endoplasmic reticulum. A functional difference between SSA1 and SSA2 proteins is expected. SSA1 can participate in the ATP-dependent disassembly of clathrin-coated vesicles.</text>
</comment>
<comment type="subunit">
    <text evidence="2 3 6">Binds human HTN3/histatin-5, a peptide from saliva, and mediates its fungicidal activity. Interacts with polyadenylate-binding protein PAB1 and Hsp70 chaperone SSA1 on translating ribosomes. Interacts with NAP1.</text>
</comment>
<comment type="interaction">
    <interactant intactId="EBI-8591">
        <id>P10591</id>
    </interactant>
    <interactant intactId="EBI-2612341">
        <id>P53940</id>
        <label>APJ1</label>
    </interactant>
    <organismsDiffer>false</organismsDiffer>
    <experiments>2</experiments>
</comment>
<comment type="interaction">
    <interactant intactId="EBI-8591">
        <id>P10591</id>
    </interactant>
    <interactant intactId="EBI-4762">
        <id>P35190</id>
        <label>CLG1</label>
    </interactant>
    <organismsDiffer>false</organismsDiffer>
    <experiments>3</experiments>
</comment>
<comment type="interaction">
    <interactant intactId="EBI-8591">
        <id>P10591</id>
    </interactant>
    <interactant intactId="EBI-21563">
        <id>P38260</id>
        <label>FES1</label>
    </interactant>
    <organismsDiffer>false</organismsDiffer>
    <experiments>3</experiments>
</comment>
<comment type="interaction">
    <interactant intactId="EBI-8591">
        <id>P10591</id>
    </interactant>
    <interactant intactId="EBI-8666">
        <id>P15108</id>
        <label>HSC82</label>
    </interactant>
    <organismsDiffer>false</organismsDiffer>
    <experiments>2</experiments>
</comment>
<comment type="interaction">
    <interactant intactId="EBI-8591">
        <id>P10591</id>
    </interactant>
    <interactant intactId="EBI-8680">
        <id>P33416</id>
        <label>HSP78</label>
    </interactant>
    <organismsDiffer>false</organismsDiffer>
    <experiments>2</experiments>
</comment>
<comment type="interaction">
    <interactant intactId="EBI-8591">
        <id>P10591</id>
    </interactant>
    <interactant intactId="EBI-8659">
        <id>P02829</id>
        <label>HSP82</label>
    </interactant>
    <organismsDiffer>false</organismsDiffer>
    <experiments>3</experiments>
</comment>
<comment type="interaction">
    <interactant intactId="EBI-8591">
        <id>P10591</id>
    </interactant>
    <interactant intactId="EBI-4499">
        <id>P25693</id>
        <label>PCL2</label>
    </interactant>
    <organismsDiffer>false</organismsDiffer>
    <experiments>3</experiments>
</comment>
<comment type="interaction">
    <interactant intactId="EBI-8591">
        <id>P10591</id>
    </interactant>
    <interactant intactId="EBI-13327">
        <id>P17157</id>
        <label>PHO85</label>
    </interactant>
    <organismsDiffer>false</organismsDiffer>
    <experiments>2</experiments>
</comment>
<comment type="interaction">
    <interactant intactId="EBI-8591">
        <id>P10591</id>
    </interactant>
    <interactant intactId="EBI-13914">
        <id>Q01939</id>
        <label>RPT6</label>
    </interactant>
    <organismsDiffer>false</organismsDiffer>
    <experiments>2</experiments>
</comment>
<comment type="interaction">
    <interactant intactId="EBI-8591">
        <id>P10591</id>
    </interactant>
    <interactant intactId="EBI-17244">
        <id>P25294</id>
        <label>SIS1</label>
    </interactant>
    <organismsDiffer>false</organismsDiffer>
    <experiments>4</experiments>
</comment>
<comment type="interaction">
    <interactant intactId="EBI-8591">
        <id>P10591</id>
    </interactant>
    <interactant intactId="EBI-8648">
        <id>P32589</id>
        <label>SSE1</label>
    </interactant>
    <organismsDiffer>false</organismsDiffer>
    <experiments>8</experiments>
</comment>
<comment type="subcellular location">
    <subcellularLocation>
        <location evidence="4">Cytoplasm</location>
    </subcellularLocation>
    <subcellularLocation>
        <location evidence="4">Secreted</location>
        <location evidence="4">Cell wall</location>
    </subcellularLocation>
</comment>
<comment type="miscellaneous">
    <text evidence="5">Present with 269000 molecules/cell in log phase SD medium.</text>
</comment>
<comment type="similarity">
    <text evidence="8">Belongs to the heat shock protein 70 family.</text>
</comment>
<name>HSP71_YEAST</name>
<dbReference type="EMBL" id="X12926">
    <property type="protein sequence ID" value="CAA31393.1"/>
    <property type="molecule type" value="Genomic_DNA"/>
</dbReference>
<dbReference type="EMBL" id="L22015">
    <property type="protein sequence ID" value="AAC04952.1"/>
    <property type="molecule type" value="Genomic_DNA"/>
</dbReference>
<dbReference type="EMBL" id="BK006935">
    <property type="protein sequence ID" value="DAA06982.1"/>
    <property type="molecule type" value="Genomic_DNA"/>
</dbReference>
<dbReference type="PIR" id="S43449">
    <property type="entry name" value="HHBYA1"/>
</dbReference>
<dbReference type="RefSeq" id="NP_009396.2">
    <property type="nucleotide sequence ID" value="NM_001178151.1"/>
</dbReference>
<dbReference type="PDB" id="3LCA">
    <property type="method" value="X-ray"/>
    <property type="resolution" value="2.19 A"/>
    <property type="chains" value="Q=631-642"/>
</dbReference>
<dbReference type="PDB" id="5LYN">
    <property type="method" value="X-ray"/>
    <property type="resolution" value="2.00 A"/>
    <property type="chains" value="C/D=636-642"/>
</dbReference>
<dbReference type="PDB" id="5Z8I">
    <property type="method" value="NMR"/>
    <property type="chains" value="A=382-554"/>
</dbReference>
<dbReference type="PDB" id="5Z8Q">
    <property type="method" value="NMR"/>
    <property type="chains" value="A=523-622"/>
</dbReference>
<dbReference type="PDBsum" id="3LCA"/>
<dbReference type="PDBsum" id="5LYN"/>
<dbReference type="PDBsum" id="5Z8I"/>
<dbReference type="PDBsum" id="5Z8Q"/>
<dbReference type="SMR" id="P10591"/>
<dbReference type="BioGRID" id="31786">
    <property type="interactions" value="1100"/>
</dbReference>
<dbReference type="ComplexPortal" id="CPX-1276">
    <property type="entry name" value="HMC complex"/>
</dbReference>
<dbReference type="ComplexPortal" id="CPX-1882">
    <property type="entry name" value="HAP1 transcriptional repressor complex, SSA1 variant"/>
</dbReference>
<dbReference type="DIP" id="DIP-2253N"/>
<dbReference type="FunCoup" id="P10591">
    <property type="interactions" value="1828"/>
</dbReference>
<dbReference type="IntAct" id="P10591">
    <property type="interactions" value="587"/>
</dbReference>
<dbReference type="MINT" id="P10591"/>
<dbReference type="STRING" id="4932.YAL005C"/>
<dbReference type="ChEMBL" id="CHEMBL5186"/>
<dbReference type="TCDB" id="3.A.16.1.6">
    <property type="family name" value="the endoplasmic reticular retrotranslocon (er-rt) family"/>
</dbReference>
<dbReference type="CarbonylDB" id="P10591"/>
<dbReference type="GlyGen" id="P10591">
    <property type="glycosylation" value="1 site"/>
</dbReference>
<dbReference type="iPTMnet" id="P10591"/>
<dbReference type="PaxDb" id="4932-YAL005C"/>
<dbReference type="PeptideAtlas" id="P10591"/>
<dbReference type="EnsemblFungi" id="YAL005C_mRNA">
    <property type="protein sequence ID" value="YAL005C"/>
    <property type="gene ID" value="YAL005C"/>
</dbReference>
<dbReference type="GeneID" id="851259"/>
<dbReference type="KEGG" id="sce:YAL005C"/>
<dbReference type="AGR" id="SGD:S000000004"/>
<dbReference type="SGD" id="S000000004">
    <property type="gene designation" value="SSA1"/>
</dbReference>
<dbReference type="VEuPathDB" id="FungiDB:YAL005C"/>
<dbReference type="eggNOG" id="KOG0101">
    <property type="taxonomic scope" value="Eukaryota"/>
</dbReference>
<dbReference type="GeneTree" id="ENSGT00940000176322"/>
<dbReference type="HOGENOM" id="CLU_005965_7_0_1"/>
<dbReference type="InParanoid" id="P10591"/>
<dbReference type="OMA" id="AYTKNQD"/>
<dbReference type="OrthoDB" id="2401965at2759"/>
<dbReference type="BioCyc" id="YEAST:G3O-28819-MONOMER"/>
<dbReference type="Reactome" id="R-SCE-3371453">
    <property type="pathway name" value="Regulation of HSF1-mediated heat shock response"/>
</dbReference>
<dbReference type="Reactome" id="R-SCE-3371497">
    <property type="pathway name" value="HSP90 chaperone cycle for steroid hormone receptors (SHR) in the presence of ligand"/>
</dbReference>
<dbReference type="Reactome" id="R-SCE-3371571">
    <property type="pathway name" value="HSF1-dependent transactivation"/>
</dbReference>
<dbReference type="Reactome" id="R-SCE-6798695">
    <property type="pathway name" value="Neutrophil degranulation"/>
</dbReference>
<dbReference type="Reactome" id="R-SCE-9841251">
    <property type="pathway name" value="Mitochondrial unfolded protein response (UPRmt)"/>
</dbReference>
<dbReference type="BioGRID-ORCS" id="851259">
    <property type="hits" value="0 hits in 10 CRISPR screens"/>
</dbReference>
<dbReference type="CD-CODE" id="67785C55">
    <property type="entry name" value="Hypersomatic shock foci"/>
</dbReference>
<dbReference type="CD-CODE" id="E03F929F">
    <property type="entry name" value="Stress granule"/>
</dbReference>
<dbReference type="EvolutionaryTrace" id="P10591"/>
<dbReference type="PRO" id="PR:P10591"/>
<dbReference type="Proteomes" id="UP000002311">
    <property type="component" value="Chromosome I"/>
</dbReference>
<dbReference type="RNAct" id="P10591">
    <property type="molecule type" value="protein"/>
</dbReference>
<dbReference type="GO" id="GO:0005737">
    <property type="term" value="C:cytoplasm"/>
    <property type="evidence" value="ECO:0000314"/>
    <property type="project" value="SGD"/>
</dbReference>
<dbReference type="GO" id="GO:0005829">
    <property type="term" value="C:cytosol"/>
    <property type="evidence" value="ECO:0007005"/>
    <property type="project" value="SGD"/>
</dbReference>
<dbReference type="GO" id="GO:0005576">
    <property type="term" value="C:extracellular region"/>
    <property type="evidence" value="ECO:0007669"/>
    <property type="project" value="UniProtKB-KW"/>
</dbReference>
<dbReference type="GO" id="GO:0009277">
    <property type="term" value="C:fungal-type cell wall"/>
    <property type="evidence" value="ECO:0000314"/>
    <property type="project" value="SGD"/>
</dbReference>
<dbReference type="GO" id="GO:0000329">
    <property type="term" value="C:fungal-type vacuole membrane"/>
    <property type="evidence" value="ECO:0000314"/>
    <property type="project" value="SGD"/>
</dbReference>
<dbReference type="GO" id="GO:0005634">
    <property type="term" value="C:nucleus"/>
    <property type="evidence" value="ECO:0000314"/>
    <property type="project" value="SGD"/>
</dbReference>
<dbReference type="GO" id="GO:0005886">
    <property type="term" value="C:plasma membrane"/>
    <property type="evidence" value="ECO:0007005"/>
    <property type="project" value="SGD"/>
</dbReference>
<dbReference type="GO" id="GO:0017053">
    <property type="term" value="C:transcription repressor complex"/>
    <property type="evidence" value="ECO:0000303"/>
    <property type="project" value="ComplexPortal"/>
</dbReference>
<dbReference type="GO" id="GO:0005524">
    <property type="term" value="F:ATP binding"/>
    <property type="evidence" value="ECO:0007669"/>
    <property type="project" value="UniProtKB-KW"/>
</dbReference>
<dbReference type="GO" id="GO:0016887">
    <property type="term" value="F:ATP hydrolysis activity"/>
    <property type="evidence" value="ECO:0000314"/>
    <property type="project" value="SGD"/>
</dbReference>
<dbReference type="GO" id="GO:0140662">
    <property type="term" value="F:ATP-dependent protein folding chaperone"/>
    <property type="evidence" value="ECO:0007669"/>
    <property type="project" value="InterPro"/>
</dbReference>
<dbReference type="GO" id="GO:0031072">
    <property type="term" value="F:heat shock protein binding"/>
    <property type="evidence" value="ECO:0000318"/>
    <property type="project" value="GO_Central"/>
</dbReference>
<dbReference type="GO" id="GO:0044183">
    <property type="term" value="F:protein folding chaperone"/>
    <property type="evidence" value="ECO:0000318"/>
    <property type="project" value="GO_Central"/>
</dbReference>
<dbReference type="GO" id="GO:0000049">
    <property type="term" value="F:tRNA binding"/>
    <property type="evidence" value="ECO:0000314"/>
    <property type="project" value="SGD"/>
</dbReference>
<dbReference type="GO" id="GO:0051082">
    <property type="term" value="F:unfolded protein binding"/>
    <property type="evidence" value="ECO:0000314"/>
    <property type="project" value="SGD"/>
</dbReference>
<dbReference type="GO" id="GO:0034605">
    <property type="term" value="P:cellular response to heat"/>
    <property type="evidence" value="ECO:0000314"/>
    <property type="project" value="SGD"/>
</dbReference>
<dbReference type="GO" id="GO:0051085">
    <property type="term" value="P:chaperone cofactor-dependent protein refolding"/>
    <property type="evidence" value="ECO:0000318"/>
    <property type="project" value="GO_Central"/>
</dbReference>
<dbReference type="GO" id="GO:0072318">
    <property type="term" value="P:clathrin coat disassembly"/>
    <property type="evidence" value="ECO:0000314"/>
    <property type="project" value="SGD"/>
</dbReference>
<dbReference type="GO" id="GO:0002181">
    <property type="term" value="P:cytoplasmic translation"/>
    <property type="evidence" value="ECO:0000315"/>
    <property type="project" value="SGD"/>
</dbReference>
<dbReference type="GO" id="GO:0072671">
    <property type="term" value="P:mitochondria-associated ubiquitin-dependent protein catabolic process"/>
    <property type="evidence" value="ECO:0000315"/>
    <property type="project" value="SGD"/>
</dbReference>
<dbReference type="GO" id="GO:0045892">
    <property type="term" value="P:negative regulation of DNA-templated transcription"/>
    <property type="evidence" value="ECO:0000303"/>
    <property type="project" value="ComplexPortal"/>
</dbReference>
<dbReference type="GO" id="GO:0043161">
    <property type="term" value="P:proteasome-mediated ubiquitin-dependent protein catabolic process"/>
    <property type="evidence" value="ECO:0000315"/>
    <property type="project" value="SGD"/>
</dbReference>
<dbReference type="GO" id="GO:0006457">
    <property type="term" value="P:protein folding"/>
    <property type="evidence" value="ECO:0000314"/>
    <property type="project" value="SGD"/>
</dbReference>
<dbReference type="GO" id="GO:0006606">
    <property type="term" value="P:protein import into nucleus"/>
    <property type="evidence" value="ECO:0000314"/>
    <property type="project" value="SGD"/>
</dbReference>
<dbReference type="GO" id="GO:0000209">
    <property type="term" value="P:protein polyubiquitination"/>
    <property type="evidence" value="ECO:0000314"/>
    <property type="project" value="SGD"/>
</dbReference>
<dbReference type="GO" id="GO:0042026">
    <property type="term" value="P:protein refolding"/>
    <property type="evidence" value="ECO:0000314"/>
    <property type="project" value="SGD"/>
</dbReference>
<dbReference type="GO" id="GO:0006626">
    <property type="term" value="P:protein targeting to mitochondrion"/>
    <property type="evidence" value="ECO:0000315"/>
    <property type="project" value="SGD"/>
</dbReference>
<dbReference type="GO" id="GO:0070482">
    <property type="term" value="P:response to oxygen levels"/>
    <property type="evidence" value="ECO:0000303"/>
    <property type="project" value="ComplexPortal"/>
</dbReference>
<dbReference type="GO" id="GO:0006616">
    <property type="term" value="P:SRP-dependent cotranslational protein targeting to membrane, translocation"/>
    <property type="evidence" value="ECO:0000314"/>
    <property type="project" value="SGD"/>
</dbReference>
<dbReference type="GO" id="GO:0035617">
    <property type="term" value="P:stress granule disassembly"/>
    <property type="evidence" value="ECO:0000314"/>
    <property type="project" value="SGD"/>
</dbReference>
<dbReference type="CDD" id="cd10233">
    <property type="entry name" value="ASKHA_NBD_HSP70_HSPA1"/>
    <property type="match status" value="1"/>
</dbReference>
<dbReference type="FunFam" id="2.60.34.10:FF:000002">
    <property type="entry name" value="Heat shock 70 kDa"/>
    <property type="match status" value="1"/>
</dbReference>
<dbReference type="FunFam" id="3.90.640.10:FF:000002">
    <property type="entry name" value="Heat shock 70 kDa"/>
    <property type="match status" value="1"/>
</dbReference>
<dbReference type="FunFam" id="3.30.30.30:FF:000001">
    <property type="entry name" value="heat shock 70 kDa protein-like"/>
    <property type="match status" value="1"/>
</dbReference>
<dbReference type="FunFam" id="3.30.420.40:FF:000135">
    <property type="entry name" value="Heat shock cognate 71 kDa protein"/>
    <property type="match status" value="1"/>
</dbReference>
<dbReference type="FunFam" id="1.20.1270.10:FF:000016">
    <property type="entry name" value="Heat shock protein 70"/>
    <property type="match status" value="1"/>
</dbReference>
<dbReference type="FunFam" id="3.30.420.40:FF:000026">
    <property type="entry name" value="Heat shock protein 70"/>
    <property type="match status" value="1"/>
</dbReference>
<dbReference type="Gene3D" id="1.20.1270.10">
    <property type="match status" value="1"/>
</dbReference>
<dbReference type="Gene3D" id="3.30.30.30">
    <property type="match status" value="1"/>
</dbReference>
<dbReference type="Gene3D" id="3.30.420.40">
    <property type="match status" value="2"/>
</dbReference>
<dbReference type="Gene3D" id="3.90.640.10">
    <property type="entry name" value="Actin, Chain A, domain 4"/>
    <property type="match status" value="1"/>
</dbReference>
<dbReference type="Gene3D" id="2.60.34.10">
    <property type="entry name" value="Substrate Binding Domain Of DNAk, Chain A, domain 1"/>
    <property type="match status" value="1"/>
</dbReference>
<dbReference type="InterPro" id="IPR043129">
    <property type="entry name" value="ATPase_NBD"/>
</dbReference>
<dbReference type="InterPro" id="IPR018181">
    <property type="entry name" value="Heat_shock_70_CS"/>
</dbReference>
<dbReference type="InterPro" id="IPR029048">
    <property type="entry name" value="HSP70_C_sf"/>
</dbReference>
<dbReference type="InterPro" id="IPR029047">
    <property type="entry name" value="HSP70_peptide-bd_sf"/>
</dbReference>
<dbReference type="InterPro" id="IPR013126">
    <property type="entry name" value="Hsp_70_fam"/>
</dbReference>
<dbReference type="NCBIfam" id="NF001413">
    <property type="entry name" value="PRK00290.1"/>
    <property type="match status" value="1"/>
</dbReference>
<dbReference type="PANTHER" id="PTHR19375">
    <property type="entry name" value="HEAT SHOCK PROTEIN 70KDA"/>
    <property type="match status" value="1"/>
</dbReference>
<dbReference type="Pfam" id="PF00012">
    <property type="entry name" value="HSP70"/>
    <property type="match status" value="1"/>
</dbReference>
<dbReference type="PRINTS" id="PR00301">
    <property type="entry name" value="HEATSHOCK70"/>
</dbReference>
<dbReference type="SUPFAM" id="SSF53067">
    <property type="entry name" value="Actin-like ATPase domain"/>
    <property type="match status" value="2"/>
</dbReference>
<dbReference type="SUPFAM" id="SSF100934">
    <property type="entry name" value="Heat shock protein 70kD (HSP70), C-terminal subdomain"/>
    <property type="match status" value="1"/>
</dbReference>
<dbReference type="SUPFAM" id="SSF100920">
    <property type="entry name" value="Heat shock protein 70kD (HSP70), peptide-binding domain"/>
    <property type="match status" value="1"/>
</dbReference>
<dbReference type="PROSITE" id="PS00297">
    <property type="entry name" value="HSP70_1"/>
    <property type="match status" value="1"/>
</dbReference>
<dbReference type="PROSITE" id="PS00329">
    <property type="entry name" value="HSP70_2"/>
    <property type="match status" value="1"/>
</dbReference>
<dbReference type="PROSITE" id="PS01036">
    <property type="entry name" value="HSP70_3"/>
    <property type="match status" value="1"/>
</dbReference>
<proteinExistence type="evidence at protein level"/>
<reference key="1">
    <citation type="journal article" date="1989" name="Nucleic Acids Res.">
        <title>The SSA1 and SSA2 genes of the yeast Saccharomyces cerevisiae.</title>
        <authorList>
            <person name="Slater M.R."/>
            <person name="Craig E.A."/>
        </authorList>
    </citation>
    <scope>NUCLEOTIDE SEQUENCE [GENOMIC DNA]</scope>
    <source>
        <strain>ATCC 204508 / S288c</strain>
    </source>
</reference>
<reference key="2">
    <citation type="submission" date="1993-06" db="EMBL/GenBank/DDBJ databases">
        <authorList>
            <person name="Slater M.R."/>
        </authorList>
    </citation>
    <scope>SEQUENCE REVISION TO 208; 418 AND 422</scope>
</reference>
<reference key="3">
    <citation type="journal article" date="1994" name="Yeast">
        <title>Sequencing of chromosome I of Saccharomyces cerevisiae: analysis of the 42 kbp SPO7-CENI-CDC15 region.</title>
        <authorList>
            <person name="Clark M.W."/>
            <person name="Keng T."/>
            <person name="Storms R.K."/>
            <person name="Zhong W.-W."/>
            <person name="Fortin N."/>
            <person name="Zeng B."/>
            <person name="Delaney S."/>
            <person name="Ouellette B.F.F."/>
            <person name="Barton A.B."/>
            <person name="Kaback D.B."/>
            <person name="Bussey H."/>
        </authorList>
    </citation>
    <scope>NUCLEOTIDE SEQUENCE [GENOMIC DNA]</scope>
    <source>
        <strain>ATCC 204511 / S288c / AB972</strain>
    </source>
</reference>
<reference key="4">
    <citation type="journal article" date="1995" name="Proc. Natl. Acad. Sci. U.S.A.">
        <title>The nucleotide sequence of chromosome I from Saccharomyces cerevisiae.</title>
        <authorList>
            <person name="Bussey H."/>
            <person name="Kaback D.B."/>
            <person name="Zhong W.-W."/>
            <person name="Vo D.H."/>
            <person name="Clark M.W."/>
            <person name="Fortin N."/>
            <person name="Hall J."/>
            <person name="Ouellette B.F.F."/>
            <person name="Keng T."/>
            <person name="Barton A.B."/>
            <person name="Su Y."/>
            <person name="Davies C.J."/>
            <person name="Storms R.K."/>
        </authorList>
    </citation>
    <scope>NUCLEOTIDE SEQUENCE [LARGE SCALE GENOMIC DNA]</scope>
    <source>
        <strain>ATCC 204508 / S288c</strain>
    </source>
</reference>
<reference key="5">
    <citation type="journal article" date="2014" name="G3 (Bethesda)">
        <title>The reference genome sequence of Saccharomyces cerevisiae: Then and now.</title>
        <authorList>
            <person name="Engel S.R."/>
            <person name="Dietrich F.S."/>
            <person name="Fisk D.G."/>
            <person name="Binkley G."/>
            <person name="Balakrishnan R."/>
            <person name="Costanzo M.C."/>
            <person name="Dwight S.S."/>
            <person name="Hitz B.C."/>
            <person name="Karra K."/>
            <person name="Nash R.S."/>
            <person name="Weng S."/>
            <person name="Wong E.D."/>
            <person name="Lloyd P."/>
            <person name="Skrzypek M.S."/>
            <person name="Miyasato S.R."/>
            <person name="Simison M."/>
            <person name="Cherry J.M."/>
        </authorList>
    </citation>
    <scope>GENOME REANNOTATION</scope>
    <source>
        <strain>ATCC 204508 / S288c</strain>
    </source>
</reference>
<reference key="6">
    <citation type="journal article" date="1994" name="Electrophoresis">
        <title>Protein identifications for a Saccharomyces cerevisiae protein database.</title>
        <authorList>
            <person name="Garrels J.I."/>
            <person name="Futcher B."/>
            <person name="Kobayashi R."/>
            <person name="Latter G.I."/>
            <person name="Schwender B."/>
            <person name="Volpe T."/>
            <person name="Warner J.R."/>
            <person name="McLaughlin C.S."/>
        </authorList>
    </citation>
    <scope>PROTEIN SEQUENCE OF 92-98 AND 326-342</scope>
    <source>
        <strain>ATCC 204508 / S288c</strain>
    </source>
</reference>
<reference key="7">
    <citation type="journal article" date="1996" name="FEMS Microbiol. Lett.">
        <title>Protein expression during exponential growth in 0.7 M NaCl medium of Saccharomyces cerevisiae.</title>
        <authorList>
            <person name="Norbeck J."/>
            <person name="Blomberg A."/>
        </authorList>
    </citation>
    <scope>PROTEIN SEQUENCE OF 187-196</scope>
    <source>
        <strain>ATCC 38531 / Y41</strain>
    </source>
</reference>
<reference key="8">
    <citation type="journal article" date="1984" name="Nucleic Acids Res.">
        <title>Transfer RNA splicing in Saccharomyces cerevisiae: defining the substrates.</title>
        <authorList>
            <person name="Ogden R.C."/>
            <person name="Lee M.-C."/>
            <person name="Knapp G."/>
        </authorList>
    </citation>
    <scope>NUCLEOTIDE SEQUENCE [GENOMIC DNA] OF 591-642</scope>
</reference>
<reference key="9">
    <citation type="journal article" date="1997" name="Electrophoresis">
        <title>Proteome studies of Saccharomyces cerevisiae: identification and characterization of abundant proteins.</title>
        <authorList>
            <person name="Garrels J.I."/>
            <person name="McLaughlin C.S."/>
            <person name="Warner J.R."/>
            <person name="Futcher B."/>
            <person name="Latter G.I."/>
            <person name="Kobayashi R."/>
            <person name="Schwender B."/>
            <person name="Volpe T."/>
            <person name="Anderson D.S."/>
            <person name="Mesquita-Fuentes R."/>
            <person name="Payne W.E."/>
        </authorList>
    </citation>
    <scope>ACETYLATION AT SER-2</scope>
</reference>
<reference key="10">
    <citation type="journal article" date="2001" name="J. Biol. Chem.">
        <title>The yeast hsp70 homologue Ssa is required for translation and interacts with Sis1 and Pab1 on translating ribosomes.</title>
        <authorList>
            <person name="Horton L.E."/>
            <person name="James P."/>
            <person name="Craig E.A."/>
            <person name="Hensold J.O."/>
        </authorList>
    </citation>
    <scope>INTERACTION WITH PAB1 AND SIS1</scope>
</reference>
<reference key="11">
    <citation type="journal article" date="2003" name="J. Biol. Chem.">
        <title>Candida albicans Ssa1/2p is the cell envelope binding protein for human salivary histatin 5.</title>
        <authorList>
            <person name="Li X.S."/>
            <person name="Reddy M.S."/>
            <person name="Baev D."/>
            <person name="Edgerton M."/>
        </authorList>
    </citation>
    <scope>FUNCTION</scope>
    <scope>INTERACTION WITH HUMAN HTN3</scope>
</reference>
<reference key="12">
    <citation type="journal article" date="2003" name="Nature">
        <title>Global analysis of protein localization in budding yeast.</title>
        <authorList>
            <person name="Huh W.-K."/>
            <person name="Falvo J.V."/>
            <person name="Gerke L.C."/>
            <person name="Carroll A.S."/>
            <person name="Howson R.W."/>
            <person name="Weissman J.S."/>
            <person name="O'Shea E.K."/>
        </authorList>
    </citation>
    <scope>SUBCELLULAR LOCATION [LARGE SCALE ANALYSIS]</scope>
</reference>
<reference key="13">
    <citation type="journal article" date="2003" name="Nature">
        <title>Global analysis of protein expression in yeast.</title>
        <authorList>
            <person name="Ghaemmaghami S."/>
            <person name="Huh W.-K."/>
            <person name="Bower K."/>
            <person name="Howson R.W."/>
            <person name="Belle A."/>
            <person name="Dephoure N."/>
            <person name="O'Shea E.K."/>
            <person name="Weissman J.S."/>
        </authorList>
    </citation>
    <scope>LEVEL OF PROTEIN EXPRESSION [LARGE SCALE ANALYSIS]</scope>
</reference>
<reference key="14">
    <citation type="journal article" date="2007" name="Proc. Natl. Acad. Sci. U.S.A.">
        <title>Analysis of phosphorylation sites on proteins from Saccharomyces cerevisiae by electron transfer dissociation (ETD) mass spectrometry.</title>
        <authorList>
            <person name="Chi A."/>
            <person name="Huttenhower C."/>
            <person name="Geer L.Y."/>
            <person name="Coon J.J."/>
            <person name="Syka J.E.P."/>
            <person name="Bai D.L."/>
            <person name="Shabanowitz J."/>
            <person name="Burke D.J."/>
            <person name="Troyanskaya O.G."/>
            <person name="Hunt D.F."/>
        </authorList>
    </citation>
    <scope>IDENTIFICATION BY MASS SPECTROMETRY [LARGE SCALE ANALYSIS]</scope>
</reference>
<reference key="15">
    <citation type="journal article" date="2008" name="Mol. Cell. Biol.">
        <title>Phosphorylation by casein kinase 2 regulates Nap1 localization and function.</title>
        <authorList>
            <person name="Calvert M.E.K."/>
            <person name="Keck K.M."/>
            <person name="Ptak C."/>
            <person name="Shabanowitz J."/>
            <person name="Hunt D.F."/>
            <person name="Pemberton L.F."/>
        </authorList>
    </citation>
    <scope>INTERACTION WITH NAP1</scope>
    <scope>IDENTIFICATION BY MASS SPECTROMETRY</scope>
</reference>
<reference key="16">
    <citation type="journal article" date="2008" name="Mol. Cell. Proteomics">
        <title>A multidimensional chromatography technology for in-depth phosphoproteome analysis.</title>
        <authorList>
            <person name="Albuquerque C.P."/>
            <person name="Smolka M.B."/>
            <person name="Payne S.H."/>
            <person name="Bafna V."/>
            <person name="Eng J."/>
            <person name="Zhou H."/>
        </authorList>
    </citation>
    <scope>PHOSPHORYLATION [LARGE SCALE ANALYSIS] AT SER-62 AND SER-603</scope>
    <scope>IDENTIFICATION BY MASS SPECTROMETRY [LARGE SCALE ANALYSIS]</scope>
</reference>
<reference key="17">
    <citation type="journal article" date="2009" name="Science">
        <title>Global analysis of Cdk1 substrate phosphorylation sites provides insights into evolution.</title>
        <authorList>
            <person name="Holt L.J."/>
            <person name="Tuch B.B."/>
            <person name="Villen J."/>
            <person name="Johnson A.D."/>
            <person name="Gygi S.P."/>
            <person name="Morgan D.O."/>
        </authorList>
    </citation>
    <scope>PHOSPHORYLATION [LARGE SCALE ANALYSIS] AT SER-551</scope>
    <scope>IDENTIFICATION BY MASS SPECTROMETRY [LARGE SCALE ANALYSIS]</scope>
</reference>
<reference key="18">
    <citation type="journal article" date="2012" name="Proteomics">
        <title>Sites of ubiquitin attachment in Saccharomyces cerevisiae.</title>
        <authorList>
            <person name="Starita L.M."/>
            <person name="Lo R.S."/>
            <person name="Eng J.K."/>
            <person name="von Haller P.D."/>
            <person name="Fields S."/>
        </authorList>
    </citation>
    <scope>UBIQUITINATION [LARGE SCALE ANALYSIS] AT LYS-556</scope>
    <scope>IDENTIFICATION BY MASS SPECTROMETRY [LARGE SCALE ANALYSIS]</scope>
</reference>
<gene>
    <name type="primary">SSA1</name>
    <name type="ordered locus">YAL005C</name>
</gene>
<sequence length="642" mass="69657">MSKAVGIDLGTTYSCVAHFANDRVDIIANDQGNRTTPSFVAFTDTERLIGDAAKNQAAMNPSNTVFDAKRLIGRNFNDPEVQADMKHFPFKLIDVDGKPQIQVEFKGETKNFTPEQISSMVLGKMKETAESYLGAKVNDAVVTVPAYFNDSQRQATKDAGTIAGLNVLRIINEPTAAAIAYGLDKKGKEEHVLIFDLGGGTFDVSLLSIEDGIFEVKATAGDTHLGGEDFDNRLVNHFIQEFKRKNKKDLSTNQRALRRLRTACERAKRTLSSSAQTSVEIDSLFEGIDFYTSITRARFEELCADLFRSTLDPVEKVLRDAKLDKSQVDEIVLVGGSTRIPKVQKLVTDYFNGKEPNRSINPDEAVAYGAAVQAAILTGDESSKTQDLLLLDVAPLSLGIETAGGVMTKLIPRNSTIPTKKSEIFSTYADNQPGVLIQVFEGERAKTKDNNLLGKFELSGIPPAPRGVPQIEVTFDVDSNGILNVSAVEKGTGKSNKITITNDKGRLSKEDIEKMVAEAEKFKEEDEKESQRIASKNQLESIAYSLKNTISEAGDKLEQADKDTVTKKAEETISWLDSNTTASKEEFDDKLKELQDIANPIMSKLYQAGGAPGGAAGGAPGGFPGGAPPAPEAEGPTVEEVD</sequence>
<organism>
    <name type="scientific">Saccharomyces cerevisiae (strain ATCC 204508 / S288c)</name>
    <name type="common">Baker's yeast</name>
    <dbReference type="NCBI Taxonomy" id="559292"/>
    <lineage>
        <taxon>Eukaryota</taxon>
        <taxon>Fungi</taxon>
        <taxon>Dikarya</taxon>
        <taxon>Ascomycota</taxon>
        <taxon>Saccharomycotina</taxon>
        <taxon>Saccharomycetes</taxon>
        <taxon>Saccharomycetales</taxon>
        <taxon>Saccharomycetaceae</taxon>
        <taxon>Saccharomyces</taxon>
    </lineage>
</organism>